<reference key="1">
    <citation type="journal article" date="2014" name="Biochimie">
        <title>Understanding structural and functional aspects of PII snake venom metalloproteinases: Characterization of BlatH1, a hemorrhagic dimeric enzyme from the venom of Bothriechis lateralis.</title>
        <authorList>
            <person name="Camacho E."/>
            <person name="Villalobos E."/>
            <person name="Sanz L."/>
            <person name="Perez A."/>
            <person name="Escalante T."/>
            <person name="Lomonte B."/>
            <person name="Calvete J.J."/>
            <person name="Gutierrez J.M."/>
            <person name="Rucavado A."/>
        </authorList>
    </citation>
    <scope>NUCLEOTIDE SEQUENCE [MRNA]</scope>
    <scope>PROTEIN SEQUENCE OF 437-452</scope>
    <scope>FUNCTION</scope>
    <scope>ACTIVITY REGULATION</scope>
    <scope>SUBUNIT</scope>
    <scope>TOXIC DOSE</scope>
    <scope>MASS SPECTROMETRY</scope>
    <scope>IDENTIFICATION BY MASS SPECTROMETRY</scope>
    <source>
        <tissue>Venom</tissue>
        <tissue>Venom gland</tissue>
    </source>
</reference>
<keyword id="KW-0106">Calcium</keyword>
<keyword id="KW-0903">Direct protein sequencing</keyword>
<keyword id="KW-1015">Disulfide bond</keyword>
<keyword id="KW-0325">Glycoprotein</keyword>
<keyword id="KW-1200">Hemorrhagic toxin</keyword>
<keyword id="KW-1199">Hemostasis impairing toxin</keyword>
<keyword id="KW-0378">Hydrolase</keyword>
<keyword id="KW-0479">Metal-binding</keyword>
<keyword id="KW-0482">Metalloprotease</keyword>
<keyword id="KW-1201">Platelet aggregation inhibiting toxin</keyword>
<keyword id="KW-0645">Protease</keyword>
<keyword id="KW-0873">Pyrrolidone carboxylic acid</keyword>
<keyword id="KW-0964">Secreted</keyword>
<keyword id="KW-0732">Signal</keyword>
<keyword id="KW-0800">Toxin</keyword>
<keyword id="KW-0862">Zinc</keyword>
<keyword id="KW-0865">Zymogen</keyword>
<organism>
    <name type="scientific">Bothriechis lateralis</name>
    <name type="common">Side-striped palm pitviper</name>
    <dbReference type="NCBI Taxonomy" id="44727"/>
    <lineage>
        <taxon>Eukaryota</taxon>
        <taxon>Metazoa</taxon>
        <taxon>Chordata</taxon>
        <taxon>Craniata</taxon>
        <taxon>Vertebrata</taxon>
        <taxon>Euteleostomi</taxon>
        <taxon>Lepidosauria</taxon>
        <taxon>Squamata</taxon>
        <taxon>Bifurcata</taxon>
        <taxon>Unidentata</taxon>
        <taxon>Episquamata</taxon>
        <taxon>Toxicofera</taxon>
        <taxon>Serpentes</taxon>
        <taxon>Colubroidea</taxon>
        <taxon>Viperidae</taxon>
        <taxon>Crotalinae</taxon>
        <taxon>Bothriechis</taxon>
    </lineage>
</organism>
<sequence length="484" mass="54298">MIQVLLVTICLAALPYQGSSIILESGNVNDYEVVYPRKVTALPKGAGQPKYEDAMQYEFKVNGEPVVLHLEKNKGLFSKDYSETHYSSDGRKITTNPPVEDHCYYHGRIENDADSTGSISACNGLKGHFKLQGEMYLIEPLKLSDSEAHAIYKYENVEKEDEAPKMCGVTETNWESYEPIKKASQSNLTPEQQRFNPFKYVELVIVADHRMFTKYNGDLEKIRIKIYEIVNILNEMFRYLYIRIALVDLEIWSNRDLINVTSVAGDTLDSFGNWRETDLLKRKSHDNAQLLTGIDFNGTTIGIAYIASMCNPYLSVGIVQDHSEINFLIAVTMAHEMGHNLGMRHDTDYCTCGGYSCIMCAVLSDQPSKFFSNCSYIQYGKFIMNQNSQCILNEPLGTDIVSPPVCGNEILEVGEECDCGCPTNCQDPCCNAATCKQYSWVQCESGECCEQCRFRAAGTVCRRATDNDMDNRCTGQSADCPSNG</sequence>
<feature type="signal peptide" evidence="2">
    <location>
        <begin position="1"/>
        <end position="20"/>
    </location>
</feature>
<feature type="propeptide" id="PRO_0000425968" evidence="1">
    <location>
        <begin position="21"/>
        <end position="190"/>
    </location>
</feature>
<feature type="chain" id="PRO_0000425969" description="Zinc metalloproteinase-disintegrin BlatH1">
    <location>
        <begin position="191"/>
        <end position="484"/>
    </location>
</feature>
<feature type="domain" description="Peptidase M12B" evidence="4">
    <location>
        <begin position="199"/>
        <end position="395"/>
    </location>
</feature>
<feature type="domain" description="Disintegrin" evidence="3">
    <location>
        <begin position="403"/>
        <end position="484"/>
    </location>
</feature>
<feature type="short sequence motif" description="TDN-tripeptide">
    <location>
        <begin position="465"/>
        <end position="467"/>
    </location>
</feature>
<feature type="active site" evidence="4 5">
    <location>
        <position position="336"/>
    </location>
</feature>
<feature type="binding site" evidence="1">
    <location>
        <position position="202"/>
    </location>
    <ligand>
        <name>Ca(2+)</name>
        <dbReference type="ChEBI" id="CHEBI:29108"/>
        <label>1</label>
    </ligand>
</feature>
<feature type="binding site" evidence="1">
    <location>
        <position position="286"/>
    </location>
    <ligand>
        <name>Ca(2+)</name>
        <dbReference type="ChEBI" id="CHEBI:29108"/>
        <label>1</label>
    </ligand>
</feature>
<feature type="binding site" evidence="1">
    <location>
        <position position="335"/>
    </location>
    <ligand>
        <name>Zn(2+)</name>
        <dbReference type="ChEBI" id="CHEBI:29105"/>
        <note>catalytic</note>
    </ligand>
</feature>
<feature type="binding site" evidence="1">
    <location>
        <position position="339"/>
    </location>
    <ligand>
        <name>Zn(2+)</name>
        <dbReference type="ChEBI" id="CHEBI:29105"/>
        <note>catalytic</note>
    </ligand>
</feature>
<feature type="binding site" evidence="1">
    <location>
        <position position="345"/>
    </location>
    <ligand>
        <name>Zn(2+)</name>
        <dbReference type="ChEBI" id="CHEBI:29105"/>
        <note>catalytic</note>
    </ligand>
</feature>
<feature type="binding site" evidence="1">
    <location>
        <position position="390"/>
    </location>
    <ligand>
        <name>Ca(2+)</name>
        <dbReference type="ChEBI" id="CHEBI:29108"/>
        <label>1</label>
    </ligand>
</feature>
<feature type="binding site" evidence="1">
    <location>
        <position position="393"/>
    </location>
    <ligand>
        <name>Ca(2+)</name>
        <dbReference type="ChEBI" id="CHEBI:29108"/>
        <label>1</label>
    </ligand>
</feature>
<feature type="binding site" evidence="1">
    <location>
        <position position="405"/>
    </location>
    <ligand>
        <name>Ca(2+)</name>
        <dbReference type="ChEBI" id="CHEBI:29108"/>
        <label>2</label>
    </ligand>
</feature>
<feature type="binding site" evidence="1">
    <location>
        <position position="408"/>
    </location>
    <ligand>
        <name>Ca(2+)</name>
        <dbReference type="ChEBI" id="CHEBI:29108"/>
        <label>2</label>
    </ligand>
</feature>
<feature type="binding site" evidence="1">
    <location>
        <position position="412"/>
    </location>
    <ligand>
        <name>Ca(2+)</name>
        <dbReference type="ChEBI" id="CHEBI:29108"/>
        <label>2</label>
    </ligand>
</feature>
<feature type="binding site" evidence="1">
    <location>
        <position position="415"/>
    </location>
    <ligand>
        <name>Ca(2+)</name>
        <dbReference type="ChEBI" id="CHEBI:29108"/>
        <label>2</label>
    </ligand>
</feature>
<feature type="binding site" evidence="1">
    <location>
        <position position="418"/>
    </location>
    <ligand>
        <name>Ca(2+)</name>
        <dbReference type="ChEBI" id="CHEBI:29108"/>
        <label>2</label>
    </ligand>
</feature>
<feature type="modified residue" description="Pyrrolidone carboxylic acid (Glu)" evidence="1">
    <location>
        <position position="191"/>
    </location>
</feature>
<feature type="glycosylation site" description="N-linked (GlcNAc...) asparagine" evidence="2">
    <location>
        <position position="259"/>
    </location>
</feature>
<feature type="glycosylation site" description="N-linked (GlcNAc...) asparagine" evidence="2">
    <location>
        <position position="297"/>
    </location>
</feature>
<feature type="glycosylation site" description="N-linked (GlcNAc...) asparagine" evidence="2">
    <location>
        <position position="373"/>
    </location>
</feature>
<feature type="disulfide bond" evidence="1">
    <location>
        <begin position="310"/>
        <end position="390"/>
    </location>
</feature>
<feature type="disulfide bond" evidence="1">
    <location>
        <begin position="350"/>
        <end position="374"/>
    </location>
</feature>
<feature type="disulfide bond" evidence="1">
    <location>
        <begin position="352"/>
        <end position="357"/>
    </location>
</feature>
<feature type="disulfide bond" evidence="2">
    <location>
        <begin position="406"/>
        <end position="425"/>
    </location>
</feature>
<feature type="disulfide bond" evidence="1">
    <location>
        <begin position="417"/>
        <end position="435"/>
    </location>
</feature>
<feature type="disulfide bond" evidence="1">
    <location>
        <begin position="419"/>
        <end position="430"/>
    </location>
</feature>
<feature type="disulfide bond" description="Interchain" evidence="3 4">
    <location>
        <position position="421"/>
    </location>
</feature>
<feature type="disulfide bond" evidence="1">
    <location>
        <begin position="429"/>
        <end position="452"/>
    </location>
</feature>
<feature type="disulfide bond" evidence="1">
    <location>
        <begin position="443"/>
        <end position="449"/>
    </location>
</feature>
<feature type="disulfide bond" evidence="1">
    <location>
        <begin position="448"/>
        <end position="473"/>
    </location>
</feature>
<feature type="disulfide bond" evidence="1">
    <location>
        <begin position="461"/>
        <end position="480"/>
    </location>
</feature>
<comment type="function">
    <text evidence="6">Snake venom zinc metalloprotease-disintegrin that hydrolyzes azocasein, gelatin and fibrinogen (Aalpha and Bbeta chains and partially gamma-chain), and exerts a potent local and systemic hemorrhagic activity in mice. It inhibits ADP- and collagen-induced human platelet aggregation (IC(50) = 0.3 uM and 0.7 uM for ADP and collagen, respectively). This inhibition is dependent of protease activity, and probably occurs through the degradation of an unknown platelet receptor.</text>
</comment>
<comment type="cofactor">
    <cofactor evidence="1">
        <name>Zn(2+)</name>
        <dbReference type="ChEBI" id="CHEBI:29105"/>
    </cofactor>
    <text evidence="1">Binds 1 zinc ion per subunit.</text>
</comment>
<comment type="activity regulation">
    <text evidence="6">Platelet aggregation in inhibited by the metalloproteinase inhibitors EDTA and Batimastat. The hemorrhagic activity is not inhibited by the plasma proteinase inhibitor alpha2-macroglobulin, although the SVMP is able to cleave this plasma inhibitor, generating a 90 kDa product.</text>
</comment>
<comment type="subunit">
    <text evidence="6">Homodimer.</text>
</comment>
<comment type="subcellular location">
    <subcellularLocation>
        <location evidence="1">Secreted</location>
    </subcellularLocation>
</comment>
<comment type="tissue specificity">
    <text>Expressed by the venom gland.</text>
</comment>
<comment type="PTM">
    <text>The N-terminus is blocked.</text>
</comment>
<comment type="mass spectrometry" mass="83644.0" error="63.0" method="MALDI" evidence="6"/>
<comment type="toxic dose">
    <text evidence="6">LD(50) is 7.2 mg/kg by intravenous injection into mice.</text>
</comment>
<comment type="miscellaneous">
    <text>The disintegrin domain belongs to the long disintegrin subfamily.</text>
</comment>
<comment type="similarity">
    <text evidence="7">Belongs to the venom metalloproteinase (M12B) family. P-II subfamily. P-IIc sub-subfamily.</text>
</comment>
<comment type="caution">
    <text evidence="7">This protein does not undergo proteolytic processing to release the disintegrin domain.</text>
</comment>
<proteinExistence type="evidence at protein level"/>
<name>VM2H1_BOTLA</name>
<protein>
    <recommendedName>
        <fullName>Zinc metalloproteinase-disintegrin BlatH1</fullName>
        <ecNumber>3.4.24.-</ecNumber>
    </recommendedName>
    <alternativeName>
        <fullName>Snake venom metalloproteinase</fullName>
        <shortName>SVMP</shortName>
    </alternativeName>
</protein>
<evidence type="ECO:0000250" key="1"/>
<evidence type="ECO:0000255" key="2"/>
<evidence type="ECO:0000255" key="3">
    <source>
        <dbReference type="PROSITE-ProRule" id="PRU00068"/>
    </source>
</evidence>
<evidence type="ECO:0000255" key="4">
    <source>
        <dbReference type="PROSITE-ProRule" id="PRU00276"/>
    </source>
</evidence>
<evidence type="ECO:0000255" key="5">
    <source>
        <dbReference type="PROSITE-ProRule" id="PRU10095"/>
    </source>
</evidence>
<evidence type="ECO:0000269" key="6">
    <source>
    </source>
</evidence>
<evidence type="ECO:0000305" key="7"/>
<accession>U5PZ28</accession>
<dbReference type="EC" id="3.4.24.-"/>
<dbReference type="EMBL" id="KF309674">
    <property type="protein sequence ID" value="AGY49227.1"/>
    <property type="molecule type" value="mRNA"/>
</dbReference>
<dbReference type="SMR" id="U5PZ28"/>
<dbReference type="GO" id="GO:0005576">
    <property type="term" value="C:extracellular region"/>
    <property type="evidence" value="ECO:0007669"/>
    <property type="project" value="UniProtKB-SubCell"/>
</dbReference>
<dbReference type="GO" id="GO:0005886">
    <property type="term" value="C:plasma membrane"/>
    <property type="evidence" value="ECO:0007669"/>
    <property type="project" value="TreeGrafter"/>
</dbReference>
<dbReference type="GO" id="GO:0046872">
    <property type="term" value="F:metal ion binding"/>
    <property type="evidence" value="ECO:0007669"/>
    <property type="project" value="UniProtKB-KW"/>
</dbReference>
<dbReference type="GO" id="GO:0004222">
    <property type="term" value="F:metalloendopeptidase activity"/>
    <property type="evidence" value="ECO:0007669"/>
    <property type="project" value="InterPro"/>
</dbReference>
<dbReference type="GO" id="GO:0090729">
    <property type="term" value="F:toxin activity"/>
    <property type="evidence" value="ECO:0007669"/>
    <property type="project" value="UniProtKB-KW"/>
</dbReference>
<dbReference type="GO" id="GO:0006508">
    <property type="term" value="P:proteolysis"/>
    <property type="evidence" value="ECO:0007669"/>
    <property type="project" value="UniProtKB-KW"/>
</dbReference>
<dbReference type="CDD" id="cd04269">
    <property type="entry name" value="ZnMc_adamalysin_II_like"/>
    <property type="match status" value="1"/>
</dbReference>
<dbReference type="FunFam" id="4.10.70.10:FF:000003">
    <property type="entry name" value="Disintegrin and metalloproteinase domain-containing protein 17"/>
    <property type="match status" value="1"/>
</dbReference>
<dbReference type="FunFam" id="3.40.390.10:FF:000002">
    <property type="entry name" value="Disintegrin and metalloproteinase domain-containing protein 22"/>
    <property type="match status" value="1"/>
</dbReference>
<dbReference type="Gene3D" id="3.40.390.10">
    <property type="entry name" value="Collagenase (Catalytic Domain)"/>
    <property type="match status" value="1"/>
</dbReference>
<dbReference type="Gene3D" id="4.10.70.10">
    <property type="entry name" value="Disintegrin domain"/>
    <property type="match status" value="1"/>
</dbReference>
<dbReference type="InterPro" id="IPR018358">
    <property type="entry name" value="Disintegrin_CS"/>
</dbReference>
<dbReference type="InterPro" id="IPR001762">
    <property type="entry name" value="Disintegrin_dom"/>
</dbReference>
<dbReference type="InterPro" id="IPR036436">
    <property type="entry name" value="Disintegrin_dom_sf"/>
</dbReference>
<dbReference type="InterPro" id="IPR024079">
    <property type="entry name" value="MetalloPept_cat_dom_sf"/>
</dbReference>
<dbReference type="InterPro" id="IPR001590">
    <property type="entry name" value="Peptidase_M12B"/>
</dbReference>
<dbReference type="InterPro" id="IPR002870">
    <property type="entry name" value="Peptidase_M12B_N"/>
</dbReference>
<dbReference type="InterPro" id="IPR034027">
    <property type="entry name" value="Reprolysin_adamalysin"/>
</dbReference>
<dbReference type="PANTHER" id="PTHR11905">
    <property type="entry name" value="ADAM A DISINTEGRIN AND METALLOPROTEASE DOMAIN"/>
    <property type="match status" value="1"/>
</dbReference>
<dbReference type="PANTHER" id="PTHR11905:SF32">
    <property type="entry name" value="DISINTEGRIN AND METALLOPROTEINASE DOMAIN-CONTAINING PROTEIN 28"/>
    <property type="match status" value="1"/>
</dbReference>
<dbReference type="Pfam" id="PF00200">
    <property type="entry name" value="Disintegrin"/>
    <property type="match status" value="1"/>
</dbReference>
<dbReference type="Pfam" id="PF01562">
    <property type="entry name" value="Pep_M12B_propep"/>
    <property type="match status" value="1"/>
</dbReference>
<dbReference type="Pfam" id="PF01421">
    <property type="entry name" value="Reprolysin"/>
    <property type="match status" value="1"/>
</dbReference>
<dbReference type="PRINTS" id="PR00289">
    <property type="entry name" value="DISINTEGRIN"/>
</dbReference>
<dbReference type="SMART" id="SM00050">
    <property type="entry name" value="DISIN"/>
    <property type="match status" value="1"/>
</dbReference>
<dbReference type="SUPFAM" id="SSF57552">
    <property type="entry name" value="Blood coagulation inhibitor (disintegrin)"/>
    <property type="match status" value="1"/>
</dbReference>
<dbReference type="SUPFAM" id="SSF55486">
    <property type="entry name" value="Metalloproteases ('zincins'), catalytic domain"/>
    <property type="match status" value="1"/>
</dbReference>
<dbReference type="PROSITE" id="PS50215">
    <property type="entry name" value="ADAM_MEPRO"/>
    <property type="match status" value="1"/>
</dbReference>
<dbReference type="PROSITE" id="PS00427">
    <property type="entry name" value="DISINTEGRIN_1"/>
    <property type="match status" value="1"/>
</dbReference>
<dbReference type="PROSITE" id="PS50214">
    <property type="entry name" value="DISINTEGRIN_2"/>
    <property type="match status" value="1"/>
</dbReference>
<dbReference type="PROSITE" id="PS00142">
    <property type="entry name" value="ZINC_PROTEASE"/>
    <property type="match status" value="1"/>
</dbReference>